<comment type="function">
    <text evidence="1">Catalyzes the hydrolysis of fructose 1,6-bisphosphate (Fru 1,6-P2) and sedoheptulose 1,7-bisphosphate (Sed 1,7-P2) to fructose 6-phosphate and sedoheptulose 7-phosphate, respectively.</text>
</comment>
<comment type="catalytic activity">
    <reaction>
        <text>beta-D-fructose 1,6-bisphosphate + H2O = beta-D-fructose 6-phosphate + phosphate</text>
        <dbReference type="Rhea" id="RHEA:11064"/>
        <dbReference type="ChEBI" id="CHEBI:15377"/>
        <dbReference type="ChEBI" id="CHEBI:32966"/>
        <dbReference type="ChEBI" id="CHEBI:43474"/>
        <dbReference type="ChEBI" id="CHEBI:57634"/>
        <dbReference type="EC" id="3.1.3.11"/>
    </reaction>
</comment>
<comment type="catalytic activity">
    <reaction>
        <text>D-sedoheptulose 1,7-bisphosphate + H2O = D-sedoheptulose 7-phosphate + phosphate</text>
        <dbReference type="Rhea" id="RHEA:17461"/>
        <dbReference type="ChEBI" id="CHEBI:15377"/>
        <dbReference type="ChEBI" id="CHEBI:43474"/>
        <dbReference type="ChEBI" id="CHEBI:57483"/>
        <dbReference type="ChEBI" id="CHEBI:58335"/>
        <dbReference type="EC" id="3.1.3.37"/>
    </reaction>
</comment>
<comment type="cofactor">
    <cofactor evidence="1">
        <name>Mn(2+)</name>
        <dbReference type="ChEBI" id="CHEBI:29035"/>
    </cofactor>
</comment>
<comment type="pathway">
    <text>Carbohydrate biosynthesis; Calvin cycle.</text>
</comment>
<comment type="subunit">
    <text evidence="1">Homotetramer.</text>
</comment>
<comment type="similarity">
    <text evidence="2">Belongs to the FBPase class 2 family.</text>
</comment>
<comment type="sequence caution" evidence="2">
    <conflict type="erroneous initiation">
        <sequence resource="EMBL-CDS" id="ABB49835"/>
    </conflict>
</comment>
<name>FBSB_PROM9</name>
<accession>Q31BB0</accession>
<feature type="chain" id="PRO_0000342718" description="D-fructose 1,6-bisphosphatase class 2/sedoheptulose 1,7-bisphosphatase">
    <location>
        <begin position="1"/>
        <end position="333"/>
    </location>
</feature>
<feature type="binding site" evidence="1">
    <location>
        <position position="33"/>
    </location>
    <ligand>
        <name>Mn(2+)</name>
        <dbReference type="ChEBI" id="CHEBI:29035"/>
        <label>1</label>
    </ligand>
</feature>
<feature type="binding site" evidence="1">
    <location>
        <position position="57"/>
    </location>
    <ligand>
        <name>Mn(2+)</name>
        <dbReference type="ChEBI" id="CHEBI:29035"/>
        <label>1</label>
    </ligand>
</feature>
<feature type="binding site" evidence="1">
    <location>
        <position position="85"/>
    </location>
    <ligand>
        <name>Mn(2+)</name>
        <dbReference type="ChEBI" id="CHEBI:29035"/>
        <label>2</label>
    </ligand>
</feature>
<feature type="binding site" evidence="1">
    <location>
        <begin position="88"/>
        <end position="90"/>
    </location>
    <ligand>
        <name>substrate</name>
    </ligand>
</feature>
<feature type="binding site" evidence="1">
    <location>
        <position position="88"/>
    </location>
    <ligand>
        <name>Mn(2+)</name>
        <dbReference type="ChEBI" id="CHEBI:29035"/>
        <label>2</label>
    </ligand>
</feature>
<feature type="binding site" evidence="1">
    <location>
        <position position="119"/>
    </location>
    <ligand>
        <name>substrate</name>
    </ligand>
</feature>
<feature type="binding site" evidence="1">
    <location>
        <begin position="164"/>
        <end position="166"/>
    </location>
    <ligand>
        <name>substrate</name>
    </ligand>
</feature>
<feature type="binding site" evidence="1">
    <location>
        <begin position="186"/>
        <end position="188"/>
    </location>
    <ligand>
        <name>substrate</name>
    </ligand>
</feature>
<feature type="binding site" evidence="1">
    <location>
        <position position="213"/>
    </location>
    <ligand>
        <name>Mn(2+)</name>
        <dbReference type="ChEBI" id="CHEBI:29035"/>
        <label>2</label>
    </ligand>
</feature>
<reference key="1">
    <citation type="journal article" date="2006" name="Science">
        <title>Genomic islands and the ecology and evolution of Prochlorococcus.</title>
        <authorList>
            <person name="Coleman M.L."/>
            <person name="Sullivan M.B."/>
            <person name="Martiny A.C."/>
            <person name="Steglich C."/>
            <person name="Barry K."/>
            <person name="Delong E.F."/>
            <person name="Chisholm S.W."/>
        </authorList>
    </citation>
    <scope>NUCLEOTIDE SEQUENCE [LARGE SCALE GENOMIC DNA]</scope>
    <source>
        <strain>MIT 9312</strain>
    </source>
</reference>
<evidence type="ECO:0000250" key="1"/>
<evidence type="ECO:0000305" key="2"/>
<organism>
    <name type="scientific">Prochlorococcus marinus (strain MIT 9312)</name>
    <dbReference type="NCBI Taxonomy" id="74546"/>
    <lineage>
        <taxon>Bacteria</taxon>
        <taxon>Bacillati</taxon>
        <taxon>Cyanobacteriota</taxon>
        <taxon>Cyanophyceae</taxon>
        <taxon>Synechococcales</taxon>
        <taxon>Prochlorococcaceae</taxon>
        <taxon>Prochlorococcus</taxon>
    </lineage>
</organism>
<sequence length="333" mass="35090">MNQTLIQEILEVVEQAAIASAKLTGLGQKDEADAAAVEAMRLRMGKIEMKGKIVIGEGERDEAPMLYIGEEVGSGSGPGVDFAVDPCEGTNLCANNQRGSMAVLAASDTGGLFNAPDFYMNKLAAPPAAKGKVDIRNSATENLKILSDCLDLSIDELTVVVMDRTRHKDLIKEIRGCGAKVQPISDGDVQAAIACGFAGTGTHCLMGIGAAPEGVISAAAMRALGGHFQGQLVYDPAIAQTSEWADYTKEGNIKRLNEMGITDIDKIYEANELASGENVVFAGSGITDGLLFDGVKFERDCVRTSSLVISTLDSTARFTNTVHIKDGAKSISL</sequence>
<gene>
    <name type="ordered locus">PMT9312_0775</name>
</gene>
<proteinExistence type="inferred from homology"/>
<protein>
    <recommendedName>
        <fullName>D-fructose 1,6-bisphosphatase class 2/sedoheptulose 1,7-bisphosphatase</fullName>
        <shortName>FBPase class 2/SBPase</shortName>
        <ecNumber>3.1.3.11</ecNumber>
        <ecNumber>3.1.3.37</ecNumber>
    </recommendedName>
</protein>
<dbReference type="EC" id="3.1.3.11"/>
<dbReference type="EC" id="3.1.3.37"/>
<dbReference type="EMBL" id="CP000111">
    <property type="protein sequence ID" value="ABB49835.1"/>
    <property type="status" value="ALT_INIT"/>
    <property type="molecule type" value="Genomic_DNA"/>
</dbReference>
<dbReference type="RefSeq" id="WP_025926367.1">
    <property type="nucleotide sequence ID" value="NC_007577.1"/>
</dbReference>
<dbReference type="SMR" id="Q31BB0"/>
<dbReference type="STRING" id="74546.PMT9312_0775"/>
<dbReference type="KEGG" id="pmi:PMT9312_0775"/>
<dbReference type="eggNOG" id="COG1494">
    <property type="taxonomic scope" value="Bacteria"/>
</dbReference>
<dbReference type="HOGENOM" id="CLU_054938_0_0_3"/>
<dbReference type="OrthoDB" id="9779353at2"/>
<dbReference type="UniPathway" id="UPA00116"/>
<dbReference type="Proteomes" id="UP000002715">
    <property type="component" value="Chromosome"/>
</dbReference>
<dbReference type="GO" id="GO:0005829">
    <property type="term" value="C:cytosol"/>
    <property type="evidence" value="ECO:0007669"/>
    <property type="project" value="TreeGrafter"/>
</dbReference>
<dbReference type="GO" id="GO:0042132">
    <property type="term" value="F:fructose 1,6-bisphosphate 1-phosphatase activity"/>
    <property type="evidence" value="ECO:0007669"/>
    <property type="project" value="UniProtKB-EC"/>
</dbReference>
<dbReference type="GO" id="GO:0046872">
    <property type="term" value="F:metal ion binding"/>
    <property type="evidence" value="ECO:0007669"/>
    <property type="project" value="UniProtKB-KW"/>
</dbReference>
<dbReference type="GO" id="GO:0050278">
    <property type="term" value="F:sedoheptulose-bisphosphatase activity"/>
    <property type="evidence" value="ECO:0007669"/>
    <property type="project" value="UniProtKB-EC"/>
</dbReference>
<dbReference type="GO" id="GO:0030388">
    <property type="term" value="P:fructose 1,6-bisphosphate metabolic process"/>
    <property type="evidence" value="ECO:0007669"/>
    <property type="project" value="TreeGrafter"/>
</dbReference>
<dbReference type="GO" id="GO:0006094">
    <property type="term" value="P:gluconeogenesis"/>
    <property type="evidence" value="ECO:0007669"/>
    <property type="project" value="InterPro"/>
</dbReference>
<dbReference type="GO" id="GO:0006071">
    <property type="term" value="P:glycerol metabolic process"/>
    <property type="evidence" value="ECO:0007669"/>
    <property type="project" value="InterPro"/>
</dbReference>
<dbReference type="GO" id="GO:0019253">
    <property type="term" value="P:reductive pentose-phosphate cycle"/>
    <property type="evidence" value="ECO:0007669"/>
    <property type="project" value="UniProtKB-UniPathway"/>
</dbReference>
<dbReference type="CDD" id="cd01516">
    <property type="entry name" value="FBPase_glpX"/>
    <property type="match status" value="1"/>
</dbReference>
<dbReference type="FunFam" id="3.40.190.90:FF:000001">
    <property type="entry name" value="Fructose-1,6-bisphosphatase"/>
    <property type="match status" value="1"/>
</dbReference>
<dbReference type="Gene3D" id="3.40.190.90">
    <property type="match status" value="1"/>
</dbReference>
<dbReference type="Gene3D" id="3.30.540.10">
    <property type="entry name" value="Fructose-1,6-Bisphosphatase, subunit A, domain 1"/>
    <property type="match status" value="1"/>
</dbReference>
<dbReference type="InterPro" id="IPR004464">
    <property type="entry name" value="FBPase_class-2/SBPase"/>
</dbReference>
<dbReference type="NCBIfam" id="TIGR00330">
    <property type="entry name" value="glpX"/>
    <property type="match status" value="1"/>
</dbReference>
<dbReference type="PANTHER" id="PTHR30447:SF0">
    <property type="entry name" value="FRUCTOSE-1,6-BISPHOSPHATASE 1 CLASS 2-RELATED"/>
    <property type="match status" value="1"/>
</dbReference>
<dbReference type="PANTHER" id="PTHR30447">
    <property type="entry name" value="FRUCTOSE-1,6-BISPHOSPHATASE CLASS 2"/>
    <property type="match status" value="1"/>
</dbReference>
<dbReference type="Pfam" id="PF03320">
    <property type="entry name" value="FBPase_glpX"/>
    <property type="match status" value="1"/>
</dbReference>
<dbReference type="PIRSF" id="PIRSF004532">
    <property type="entry name" value="GlpX"/>
    <property type="match status" value="1"/>
</dbReference>
<dbReference type="SUPFAM" id="SSF56655">
    <property type="entry name" value="Carbohydrate phosphatase"/>
    <property type="match status" value="1"/>
</dbReference>
<keyword id="KW-0113">Calvin cycle</keyword>
<keyword id="KW-0119">Carbohydrate metabolism</keyword>
<keyword id="KW-0378">Hydrolase</keyword>
<keyword id="KW-0464">Manganese</keyword>
<keyword id="KW-0479">Metal-binding</keyword>